<accession>P43797</accession>
<reference key="1">
    <citation type="journal article" date="1995" name="Science">
        <title>Whole-genome random sequencing and assembly of Haemophilus influenzae Rd.</title>
        <authorList>
            <person name="Fleischmann R.D."/>
            <person name="Adams M.D."/>
            <person name="White O."/>
            <person name="Clayton R.A."/>
            <person name="Kirkness E.F."/>
            <person name="Kerlavage A.R."/>
            <person name="Bult C.J."/>
            <person name="Tomb J.-F."/>
            <person name="Dougherty B.A."/>
            <person name="Merrick J.M."/>
            <person name="McKenney K."/>
            <person name="Sutton G.G."/>
            <person name="FitzHugh W."/>
            <person name="Fields C.A."/>
            <person name="Gocayne J.D."/>
            <person name="Scott J.D."/>
            <person name="Shirley R."/>
            <person name="Liu L.-I."/>
            <person name="Glodek A."/>
            <person name="Kelley J.M."/>
            <person name="Weidman J.F."/>
            <person name="Phillips C.A."/>
            <person name="Spriggs T."/>
            <person name="Hedblom E."/>
            <person name="Cotton M.D."/>
            <person name="Utterback T.R."/>
            <person name="Hanna M.C."/>
            <person name="Nguyen D.T."/>
            <person name="Saudek D.M."/>
            <person name="Brandon R.C."/>
            <person name="Fine L.D."/>
            <person name="Fritchman J.L."/>
            <person name="Fuhrmann J.L."/>
            <person name="Geoghagen N.S.M."/>
            <person name="Gnehm C.L."/>
            <person name="McDonald L.A."/>
            <person name="Small K.V."/>
            <person name="Fraser C.M."/>
            <person name="Smith H.O."/>
            <person name="Venter J.C."/>
        </authorList>
    </citation>
    <scope>NUCLEOTIDE SEQUENCE [LARGE SCALE GENOMIC DNA]</scope>
    <source>
        <strain>ATCC 51907 / DSM 11121 / KW20 / Rd</strain>
    </source>
</reference>
<name>DAPA_HAEIN</name>
<evidence type="ECO:0000255" key="1">
    <source>
        <dbReference type="HAMAP-Rule" id="MF_00418"/>
    </source>
</evidence>
<evidence type="ECO:0000305" key="2"/>
<keyword id="KW-0028">Amino-acid biosynthesis</keyword>
<keyword id="KW-0963">Cytoplasm</keyword>
<keyword id="KW-0220">Diaminopimelate biosynthesis</keyword>
<keyword id="KW-0456">Lyase</keyword>
<keyword id="KW-0457">Lysine biosynthesis</keyword>
<keyword id="KW-1185">Reference proteome</keyword>
<keyword id="KW-0704">Schiff base</keyword>
<gene>
    <name evidence="1" type="primary">dapA</name>
    <name type="ordered locus">HI_0255</name>
</gene>
<sequence>MSAQNSLFSGSIVALVTPMNHYGEVDFSCLEKLVEHHIEAGSNALVSVGTTGESATLSIEENVKVIEKTVEFAKGRIPIIAGAGANATSEAITMTKLLRDSGVAGCLSVVPYYNKPTQEGMYQHFKAIAECTDLPQILYNVPSRTGSDMKPETVARLAEIENIVGIKEATRDVSRIVKIKQLAGKNFIVLSGDDATGLEAIKLGAEGVISVTNNIAAKDMADMCRYALAGDFDKAEEINARLMRLHHDLFIESNPIPVKWAAYRLGLIKSPHLRLPLTTLSEEIQPKVGDALKIAGLL</sequence>
<organism>
    <name type="scientific">Haemophilus influenzae (strain ATCC 51907 / DSM 11121 / KW20 / Rd)</name>
    <dbReference type="NCBI Taxonomy" id="71421"/>
    <lineage>
        <taxon>Bacteria</taxon>
        <taxon>Pseudomonadati</taxon>
        <taxon>Pseudomonadota</taxon>
        <taxon>Gammaproteobacteria</taxon>
        <taxon>Pasteurellales</taxon>
        <taxon>Pasteurellaceae</taxon>
        <taxon>Haemophilus</taxon>
    </lineage>
</organism>
<feature type="chain" id="PRO_0000103115" description="4-hydroxy-tetrahydrodipicolinate synthase">
    <location>
        <begin position="1"/>
        <end position="298"/>
    </location>
</feature>
<feature type="active site" description="Proton donor/acceptor" evidence="1">
    <location>
        <position position="139"/>
    </location>
</feature>
<feature type="active site" description="Schiff-base intermediate with substrate" evidence="1">
    <location>
        <position position="167"/>
    </location>
</feature>
<feature type="binding site" evidence="1">
    <location>
        <position position="51"/>
    </location>
    <ligand>
        <name>pyruvate</name>
        <dbReference type="ChEBI" id="CHEBI:15361"/>
    </ligand>
</feature>
<feature type="binding site" evidence="1">
    <location>
        <position position="209"/>
    </location>
    <ligand>
        <name>pyruvate</name>
        <dbReference type="ChEBI" id="CHEBI:15361"/>
    </ligand>
</feature>
<feature type="site" description="Part of a proton relay during catalysis" evidence="1">
    <location>
        <position position="50"/>
    </location>
</feature>
<feature type="site" description="Part of a proton relay during catalysis" evidence="1">
    <location>
        <position position="113"/>
    </location>
</feature>
<dbReference type="EC" id="4.3.3.7" evidence="1"/>
<dbReference type="EMBL" id="L42023">
    <property type="protein sequence ID" value="AAC21921.1"/>
    <property type="molecule type" value="Genomic_DNA"/>
</dbReference>
<dbReference type="PIR" id="A64058">
    <property type="entry name" value="A64058"/>
</dbReference>
<dbReference type="RefSeq" id="NP_438424.1">
    <property type="nucleotide sequence ID" value="NC_000907.1"/>
</dbReference>
<dbReference type="SMR" id="P43797"/>
<dbReference type="STRING" id="71421.HI_0255"/>
<dbReference type="EnsemblBacteria" id="AAC21921">
    <property type="protein sequence ID" value="AAC21921"/>
    <property type="gene ID" value="HI_0255"/>
</dbReference>
<dbReference type="KEGG" id="hin:HI_0255"/>
<dbReference type="PATRIC" id="fig|71421.8.peg.270"/>
<dbReference type="eggNOG" id="COG0329">
    <property type="taxonomic scope" value="Bacteria"/>
</dbReference>
<dbReference type="HOGENOM" id="CLU_049343_7_1_6"/>
<dbReference type="OrthoDB" id="9782828at2"/>
<dbReference type="PhylomeDB" id="P43797"/>
<dbReference type="BioCyc" id="HINF71421:G1GJ1-269-MONOMER"/>
<dbReference type="UniPathway" id="UPA00034">
    <property type="reaction ID" value="UER00017"/>
</dbReference>
<dbReference type="Proteomes" id="UP000000579">
    <property type="component" value="Chromosome"/>
</dbReference>
<dbReference type="GO" id="GO:0005829">
    <property type="term" value="C:cytosol"/>
    <property type="evidence" value="ECO:0000318"/>
    <property type="project" value="GO_Central"/>
</dbReference>
<dbReference type="GO" id="GO:0008840">
    <property type="term" value="F:4-hydroxy-tetrahydrodipicolinate synthase activity"/>
    <property type="evidence" value="ECO:0000318"/>
    <property type="project" value="GO_Central"/>
</dbReference>
<dbReference type="GO" id="GO:0019877">
    <property type="term" value="P:diaminopimelate biosynthetic process"/>
    <property type="evidence" value="ECO:0007669"/>
    <property type="project" value="UniProtKB-UniRule"/>
</dbReference>
<dbReference type="GO" id="GO:0009089">
    <property type="term" value="P:lysine biosynthetic process via diaminopimelate"/>
    <property type="evidence" value="ECO:0007669"/>
    <property type="project" value="UniProtKB-UniRule"/>
</dbReference>
<dbReference type="CDD" id="cd00950">
    <property type="entry name" value="DHDPS"/>
    <property type="match status" value="1"/>
</dbReference>
<dbReference type="Gene3D" id="3.20.20.70">
    <property type="entry name" value="Aldolase class I"/>
    <property type="match status" value="1"/>
</dbReference>
<dbReference type="HAMAP" id="MF_00418">
    <property type="entry name" value="DapA"/>
    <property type="match status" value="1"/>
</dbReference>
<dbReference type="InterPro" id="IPR013785">
    <property type="entry name" value="Aldolase_TIM"/>
</dbReference>
<dbReference type="InterPro" id="IPR005263">
    <property type="entry name" value="DapA"/>
</dbReference>
<dbReference type="InterPro" id="IPR002220">
    <property type="entry name" value="DapA-like"/>
</dbReference>
<dbReference type="InterPro" id="IPR020625">
    <property type="entry name" value="Schiff_base-form_aldolases_AS"/>
</dbReference>
<dbReference type="InterPro" id="IPR020624">
    <property type="entry name" value="Schiff_base-form_aldolases_CS"/>
</dbReference>
<dbReference type="NCBIfam" id="TIGR00674">
    <property type="entry name" value="dapA"/>
    <property type="match status" value="1"/>
</dbReference>
<dbReference type="PANTHER" id="PTHR12128:SF66">
    <property type="entry name" value="4-HYDROXY-2-OXOGLUTARATE ALDOLASE, MITOCHONDRIAL"/>
    <property type="match status" value="1"/>
</dbReference>
<dbReference type="PANTHER" id="PTHR12128">
    <property type="entry name" value="DIHYDRODIPICOLINATE SYNTHASE"/>
    <property type="match status" value="1"/>
</dbReference>
<dbReference type="Pfam" id="PF00701">
    <property type="entry name" value="DHDPS"/>
    <property type="match status" value="1"/>
</dbReference>
<dbReference type="PIRSF" id="PIRSF001365">
    <property type="entry name" value="DHDPS"/>
    <property type="match status" value="1"/>
</dbReference>
<dbReference type="PRINTS" id="PR00146">
    <property type="entry name" value="DHPICSNTHASE"/>
</dbReference>
<dbReference type="SMART" id="SM01130">
    <property type="entry name" value="DHDPS"/>
    <property type="match status" value="1"/>
</dbReference>
<dbReference type="SUPFAM" id="SSF51569">
    <property type="entry name" value="Aldolase"/>
    <property type="match status" value="1"/>
</dbReference>
<dbReference type="PROSITE" id="PS00665">
    <property type="entry name" value="DHDPS_1"/>
    <property type="match status" value="1"/>
</dbReference>
<dbReference type="PROSITE" id="PS00666">
    <property type="entry name" value="DHDPS_2"/>
    <property type="match status" value="1"/>
</dbReference>
<proteinExistence type="inferred from homology"/>
<comment type="function">
    <text evidence="1">Catalyzes the condensation of (S)-aspartate-beta-semialdehyde [(S)-ASA] and pyruvate to 4-hydroxy-tetrahydrodipicolinate (HTPA).</text>
</comment>
<comment type="catalytic activity">
    <reaction evidence="1">
        <text>L-aspartate 4-semialdehyde + pyruvate = (2S,4S)-4-hydroxy-2,3,4,5-tetrahydrodipicolinate + H2O + H(+)</text>
        <dbReference type="Rhea" id="RHEA:34171"/>
        <dbReference type="ChEBI" id="CHEBI:15361"/>
        <dbReference type="ChEBI" id="CHEBI:15377"/>
        <dbReference type="ChEBI" id="CHEBI:15378"/>
        <dbReference type="ChEBI" id="CHEBI:67139"/>
        <dbReference type="ChEBI" id="CHEBI:537519"/>
        <dbReference type="EC" id="4.3.3.7"/>
    </reaction>
</comment>
<comment type="pathway">
    <text evidence="1">Amino-acid biosynthesis; L-lysine biosynthesis via DAP pathway; (S)-tetrahydrodipicolinate from L-aspartate: step 3/4.</text>
</comment>
<comment type="subunit">
    <text evidence="1">Homotetramer; dimer of dimers.</text>
</comment>
<comment type="subcellular location">
    <subcellularLocation>
        <location evidence="1">Cytoplasm</location>
    </subcellularLocation>
</comment>
<comment type="similarity">
    <text evidence="1">Belongs to the DapA family.</text>
</comment>
<comment type="caution">
    <text evidence="2">Was originally thought to be a dihydrodipicolinate synthase (DHDPS), catalyzing the condensation of (S)-aspartate-beta-semialdehyde [(S)-ASA] and pyruvate to dihydrodipicolinate (DHDP). However, it was shown in E.coli that the product of the enzymatic reaction is not dihydrodipicolinate but in fact (4S)-4-hydroxy-2,3,4,5-tetrahydro-(2S)-dipicolinic acid (HTPA), and that the consecutive dehydration reaction leading to DHDP is not spontaneous but catalyzed by DapB.</text>
</comment>
<protein>
    <recommendedName>
        <fullName evidence="1">4-hydroxy-tetrahydrodipicolinate synthase</fullName>
        <shortName evidence="1">HTPA synthase</shortName>
        <ecNumber evidence="1">4.3.3.7</ecNumber>
    </recommendedName>
</protein>